<protein>
    <recommendedName>
        <fullName evidence="3">Leucine--tRNA ligase, cytoplasmic</fullName>
        <ecNumber evidence="3">6.1.1.4</ecNumber>
    </recommendedName>
    <alternativeName>
        <fullName evidence="3">Leucyl-tRNA synthetase</fullName>
        <shortName evidence="3">LeuRS</shortName>
    </alternativeName>
</protein>
<comment type="function">
    <text evidence="2">Catalyzes the specific attachment of an amino acid to its cognate tRNA in a two step reaction: the amino acid (AA) is first activated by ATP to form AA-AMP and then transferred to the acceptor end of the tRNA.</text>
</comment>
<comment type="catalytic activity">
    <reaction evidence="3">
        <text>tRNA(Leu) + L-leucine + ATP = L-leucyl-tRNA(Leu) + AMP + diphosphate</text>
        <dbReference type="Rhea" id="RHEA:11688"/>
        <dbReference type="Rhea" id="RHEA-COMP:9613"/>
        <dbReference type="Rhea" id="RHEA-COMP:9622"/>
        <dbReference type="ChEBI" id="CHEBI:30616"/>
        <dbReference type="ChEBI" id="CHEBI:33019"/>
        <dbReference type="ChEBI" id="CHEBI:57427"/>
        <dbReference type="ChEBI" id="CHEBI:78442"/>
        <dbReference type="ChEBI" id="CHEBI:78494"/>
        <dbReference type="ChEBI" id="CHEBI:456215"/>
        <dbReference type="EC" id="6.1.1.4"/>
    </reaction>
</comment>
<comment type="subcellular location">
    <subcellularLocation>
        <location evidence="4 5">Cytoplasm</location>
        <location evidence="4 5">Cytosol</location>
    </subcellularLocation>
</comment>
<comment type="similarity">
    <text evidence="3">Belongs to the class-I aminoacyl-tRNA synthetase family.</text>
</comment>
<evidence type="ECO:0000250" key="1"/>
<evidence type="ECO:0000250" key="2">
    <source>
        <dbReference type="UniProtKB" id="Q9P2J5"/>
    </source>
</evidence>
<evidence type="ECO:0000305" key="3"/>
<evidence type="ECO:0000305" key="4">
    <source>
    </source>
</evidence>
<evidence type="ECO:0000305" key="5">
    <source>
    </source>
</evidence>
<evidence type="ECO:0000312" key="6">
    <source>
        <dbReference type="Araport" id="AT1G09620"/>
    </source>
</evidence>
<name>SYLC_ARATH</name>
<dbReference type="EC" id="6.1.1.4" evidence="3"/>
<dbReference type="EMBL" id="AC000132">
    <property type="status" value="NOT_ANNOTATED_CDS"/>
    <property type="molecule type" value="Genomic_DNA"/>
</dbReference>
<dbReference type="EMBL" id="AC003970">
    <property type="status" value="NOT_ANNOTATED_CDS"/>
    <property type="molecule type" value="Genomic_DNA"/>
</dbReference>
<dbReference type="EMBL" id="CP002684">
    <property type="protein sequence ID" value="AEE28469.1"/>
    <property type="molecule type" value="Genomic_DNA"/>
</dbReference>
<dbReference type="EMBL" id="AK222125">
    <property type="protein sequence ID" value="BAD95115.1"/>
    <property type="molecule type" value="mRNA"/>
</dbReference>
<dbReference type="RefSeq" id="NP_172433.2">
    <property type="nucleotide sequence ID" value="NM_100834.5"/>
</dbReference>
<dbReference type="SMR" id="F4I116"/>
<dbReference type="FunCoup" id="F4I116">
    <property type="interactions" value="4788"/>
</dbReference>
<dbReference type="IntAct" id="F4I116">
    <property type="interactions" value="1"/>
</dbReference>
<dbReference type="STRING" id="3702.F4I116"/>
<dbReference type="PaxDb" id="3702-AT1G09620.1"/>
<dbReference type="ProMEX" id="F4I116"/>
<dbReference type="ProteomicsDB" id="234104"/>
<dbReference type="EnsemblPlants" id="AT1G09620.1">
    <property type="protein sequence ID" value="AT1G09620.1"/>
    <property type="gene ID" value="AT1G09620"/>
</dbReference>
<dbReference type="GeneID" id="837489"/>
<dbReference type="Gramene" id="AT1G09620.1">
    <property type="protein sequence ID" value="AT1G09620.1"/>
    <property type="gene ID" value="AT1G09620"/>
</dbReference>
<dbReference type="KEGG" id="ath:AT1G09620"/>
<dbReference type="Araport" id="AT1G09620"/>
<dbReference type="TAIR" id="AT1G09620"/>
<dbReference type="eggNOG" id="KOG0437">
    <property type="taxonomic scope" value="Eukaryota"/>
</dbReference>
<dbReference type="HOGENOM" id="CLU_004174_1_1_1"/>
<dbReference type="InParanoid" id="F4I116"/>
<dbReference type="OMA" id="KFIEWQF"/>
<dbReference type="CD-CODE" id="4299E36E">
    <property type="entry name" value="Nucleolus"/>
</dbReference>
<dbReference type="PRO" id="PR:F4I116"/>
<dbReference type="Proteomes" id="UP000006548">
    <property type="component" value="Chromosome 1"/>
</dbReference>
<dbReference type="ExpressionAtlas" id="F4I116">
    <property type="expression patterns" value="baseline and differential"/>
</dbReference>
<dbReference type="GO" id="GO:0009507">
    <property type="term" value="C:chloroplast"/>
    <property type="evidence" value="ECO:0007005"/>
    <property type="project" value="TAIR"/>
</dbReference>
<dbReference type="GO" id="GO:0005829">
    <property type="term" value="C:cytosol"/>
    <property type="evidence" value="ECO:0007669"/>
    <property type="project" value="UniProtKB-SubCell"/>
</dbReference>
<dbReference type="GO" id="GO:0009506">
    <property type="term" value="C:plasmodesma"/>
    <property type="evidence" value="ECO:0007005"/>
    <property type="project" value="TAIR"/>
</dbReference>
<dbReference type="GO" id="GO:0002161">
    <property type="term" value="F:aminoacyl-tRNA deacylase activity"/>
    <property type="evidence" value="ECO:0007669"/>
    <property type="project" value="InterPro"/>
</dbReference>
<dbReference type="GO" id="GO:0005524">
    <property type="term" value="F:ATP binding"/>
    <property type="evidence" value="ECO:0007669"/>
    <property type="project" value="UniProtKB-KW"/>
</dbReference>
<dbReference type="GO" id="GO:0004823">
    <property type="term" value="F:leucine-tRNA ligase activity"/>
    <property type="evidence" value="ECO:0007669"/>
    <property type="project" value="UniProtKB-EC"/>
</dbReference>
<dbReference type="GO" id="GO:0006429">
    <property type="term" value="P:leucyl-tRNA aminoacylation"/>
    <property type="evidence" value="ECO:0007669"/>
    <property type="project" value="InterPro"/>
</dbReference>
<dbReference type="GO" id="GO:0009791">
    <property type="term" value="P:post-embryonic development"/>
    <property type="evidence" value="ECO:0007669"/>
    <property type="project" value="UniProtKB-ARBA"/>
</dbReference>
<dbReference type="GO" id="GO:0048608">
    <property type="term" value="P:reproductive structure development"/>
    <property type="evidence" value="ECO:0007669"/>
    <property type="project" value="UniProtKB-ARBA"/>
</dbReference>
<dbReference type="CDD" id="cd07959">
    <property type="entry name" value="Anticodon_Ia_Leu_AEc"/>
    <property type="match status" value="1"/>
</dbReference>
<dbReference type="FunFam" id="1.10.730.10:FF:000020">
    <property type="entry name" value="Leucine--tRNA ligase cytoplasmic"/>
    <property type="match status" value="1"/>
</dbReference>
<dbReference type="FunFam" id="3.90.740.10:FF:000001">
    <property type="entry name" value="Leucine--tRNA ligase, cytoplasmic"/>
    <property type="match status" value="1"/>
</dbReference>
<dbReference type="Gene3D" id="3.40.50.620">
    <property type="entry name" value="HUPs"/>
    <property type="match status" value="1"/>
</dbReference>
<dbReference type="Gene3D" id="3.90.740.10">
    <property type="entry name" value="Valyl/Leucyl/Isoleucyl-tRNA synthetase, editing domain"/>
    <property type="match status" value="1"/>
</dbReference>
<dbReference type="InterPro" id="IPR001412">
    <property type="entry name" value="aa-tRNA-synth_I_CS"/>
</dbReference>
<dbReference type="InterPro" id="IPR002300">
    <property type="entry name" value="aa-tRNA-synth_Ia"/>
</dbReference>
<dbReference type="InterPro" id="IPR004493">
    <property type="entry name" value="Leu-tRNA-synth_Ia_arc/euk"/>
</dbReference>
<dbReference type="InterPro" id="IPR013155">
    <property type="entry name" value="M/V/L/I-tRNA-synth_anticd-bd"/>
</dbReference>
<dbReference type="InterPro" id="IPR055416">
    <property type="entry name" value="RBD_LARS1"/>
</dbReference>
<dbReference type="InterPro" id="IPR014729">
    <property type="entry name" value="Rossmann-like_a/b/a_fold"/>
</dbReference>
<dbReference type="InterPro" id="IPR009080">
    <property type="entry name" value="tRNAsynth_Ia_anticodon-bd"/>
</dbReference>
<dbReference type="InterPro" id="IPR009008">
    <property type="entry name" value="Val/Leu/Ile-tRNA-synth_edit"/>
</dbReference>
<dbReference type="NCBIfam" id="TIGR00395">
    <property type="entry name" value="leuS_arch"/>
    <property type="match status" value="1"/>
</dbReference>
<dbReference type="PANTHER" id="PTHR45794:SF1">
    <property type="entry name" value="LEUCINE--TRNA LIGASE, CYTOPLASMIC"/>
    <property type="match status" value="1"/>
</dbReference>
<dbReference type="PANTHER" id="PTHR45794">
    <property type="entry name" value="LEUCYL-TRNA SYNTHETASE"/>
    <property type="match status" value="1"/>
</dbReference>
<dbReference type="Pfam" id="PF08264">
    <property type="entry name" value="Anticodon_1"/>
    <property type="match status" value="1"/>
</dbReference>
<dbReference type="Pfam" id="PF24810">
    <property type="entry name" value="RBD_LARS1"/>
    <property type="match status" value="1"/>
</dbReference>
<dbReference type="Pfam" id="PF00133">
    <property type="entry name" value="tRNA-synt_1"/>
    <property type="match status" value="2"/>
</dbReference>
<dbReference type="SUPFAM" id="SSF47323">
    <property type="entry name" value="Anticodon-binding domain of a subclass of class I aminoacyl-tRNA synthetases"/>
    <property type="match status" value="1"/>
</dbReference>
<dbReference type="SUPFAM" id="SSF52374">
    <property type="entry name" value="Nucleotidylyl transferase"/>
    <property type="match status" value="1"/>
</dbReference>
<dbReference type="SUPFAM" id="SSF50677">
    <property type="entry name" value="ValRS/IleRS/LeuRS editing domain"/>
    <property type="match status" value="1"/>
</dbReference>
<dbReference type="PROSITE" id="PS00178">
    <property type="entry name" value="AA_TRNA_LIGASE_I"/>
    <property type="match status" value="1"/>
</dbReference>
<keyword id="KW-0030">Aminoacyl-tRNA synthetase</keyword>
<keyword id="KW-0067">ATP-binding</keyword>
<keyword id="KW-0963">Cytoplasm</keyword>
<keyword id="KW-0436">Ligase</keyword>
<keyword id="KW-0547">Nucleotide-binding</keyword>
<keyword id="KW-0648">Protein biosynthesis</keyword>
<keyword id="KW-1185">Reference proteome</keyword>
<proteinExistence type="evidence at protein level"/>
<gene>
    <name evidence="6" type="ordered locus">At1g09620</name>
</gene>
<accession>F4I116</accession>
<accession>Q56WB9</accession>
<feature type="chain" id="PRO_0000433547" description="Leucine--tRNA ligase, cytoplasmic">
    <location>
        <begin position="1"/>
        <end position="1091"/>
    </location>
</feature>
<feature type="short sequence motif" description="'HIGH' region" evidence="3">
    <location>
        <begin position="53"/>
        <end position="63"/>
    </location>
</feature>
<feature type="short sequence motif" description="'KMSKS' region" evidence="3">
    <location>
        <begin position="715"/>
        <end position="719"/>
    </location>
</feature>
<feature type="binding site" evidence="1">
    <location>
        <position position="718"/>
    </location>
    <ligand>
        <name>ATP</name>
        <dbReference type="ChEBI" id="CHEBI:30616"/>
    </ligand>
</feature>
<feature type="sequence conflict" description="In Ref. 3; BAD95115." evidence="3" ref="3">
    <original>Q</original>
    <variation>L</variation>
    <location>
        <position position="591"/>
    </location>
</feature>
<organism>
    <name type="scientific">Arabidopsis thaliana</name>
    <name type="common">Mouse-ear cress</name>
    <dbReference type="NCBI Taxonomy" id="3702"/>
    <lineage>
        <taxon>Eukaryota</taxon>
        <taxon>Viridiplantae</taxon>
        <taxon>Streptophyta</taxon>
        <taxon>Embryophyta</taxon>
        <taxon>Tracheophyta</taxon>
        <taxon>Spermatophyta</taxon>
        <taxon>Magnoliopsida</taxon>
        <taxon>eudicotyledons</taxon>
        <taxon>Gunneridae</taxon>
        <taxon>Pentapetalae</taxon>
        <taxon>rosids</taxon>
        <taxon>malvids</taxon>
        <taxon>Brassicales</taxon>
        <taxon>Brassicaceae</taxon>
        <taxon>Camelineae</taxon>
        <taxon>Arabidopsis</taxon>
    </lineage>
</organism>
<reference key="1">
    <citation type="journal article" date="2000" name="Nature">
        <title>Sequence and analysis of chromosome 1 of the plant Arabidopsis thaliana.</title>
        <authorList>
            <person name="Theologis A."/>
            <person name="Ecker J.R."/>
            <person name="Palm C.J."/>
            <person name="Federspiel N.A."/>
            <person name="Kaul S."/>
            <person name="White O."/>
            <person name="Alonso J."/>
            <person name="Altafi H."/>
            <person name="Araujo R."/>
            <person name="Bowman C.L."/>
            <person name="Brooks S.Y."/>
            <person name="Buehler E."/>
            <person name="Chan A."/>
            <person name="Chao Q."/>
            <person name="Chen H."/>
            <person name="Cheuk R.F."/>
            <person name="Chin C.W."/>
            <person name="Chung M.K."/>
            <person name="Conn L."/>
            <person name="Conway A.B."/>
            <person name="Conway A.R."/>
            <person name="Creasy T.H."/>
            <person name="Dewar K."/>
            <person name="Dunn P."/>
            <person name="Etgu P."/>
            <person name="Feldblyum T.V."/>
            <person name="Feng J.-D."/>
            <person name="Fong B."/>
            <person name="Fujii C.Y."/>
            <person name="Gill J.E."/>
            <person name="Goldsmith A.D."/>
            <person name="Haas B."/>
            <person name="Hansen N.F."/>
            <person name="Hughes B."/>
            <person name="Huizar L."/>
            <person name="Hunter J.L."/>
            <person name="Jenkins J."/>
            <person name="Johnson-Hopson C."/>
            <person name="Khan S."/>
            <person name="Khaykin E."/>
            <person name="Kim C.J."/>
            <person name="Koo H.L."/>
            <person name="Kremenetskaia I."/>
            <person name="Kurtz D.B."/>
            <person name="Kwan A."/>
            <person name="Lam B."/>
            <person name="Langin-Hooper S."/>
            <person name="Lee A."/>
            <person name="Lee J.M."/>
            <person name="Lenz C.A."/>
            <person name="Li J.H."/>
            <person name="Li Y.-P."/>
            <person name="Lin X."/>
            <person name="Liu S.X."/>
            <person name="Liu Z.A."/>
            <person name="Luros J.S."/>
            <person name="Maiti R."/>
            <person name="Marziali A."/>
            <person name="Militscher J."/>
            <person name="Miranda M."/>
            <person name="Nguyen M."/>
            <person name="Nierman W.C."/>
            <person name="Osborne B.I."/>
            <person name="Pai G."/>
            <person name="Peterson J."/>
            <person name="Pham P.K."/>
            <person name="Rizzo M."/>
            <person name="Rooney T."/>
            <person name="Rowley D."/>
            <person name="Sakano H."/>
            <person name="Salzberg S.L."/>
            <person name="Schwartz J.R."/>
            <person name="Shinn P."/>
            <person name="Southwick A.M."/>
            <person name="Sun H."/>
            <person name="Tallon L.J."/>
            <person name="Tambunga G."/>
            <person name="Toriumi M.J."/>
            <person name="Town C.D."/>
            <person name="Utterback T."/>
            <person name="Van Aken S."/>
            <person name="Vaysberg M."/>
            <person name="Vysotskaia V.S."/>
            <person name="Walker M."/>
            <person name="Wu D."/>
            <person name="Yu G."/>
            <person name="Fraser C.M."/>
            <person name="Venter J.C."/>
            <person name="Davis R.W."/>
        </authorList>
    </citation>
    <scope>NUCLEOTIDE SEQUENCE [LARGE SCALE GENOMIC DNA]</scope>
    <source>
        <strain>cv. Columbia</strain>
    </source>
</reference>
<reference key="2">
    <citation type="journal article" date="2017" name="Plant J.">
        <title>Araport11: a complete reannotation of the Arabidopsis thaliana reference genome.</title>
        <authorList>
            <person name="Cheng C.Y."/>
            <person name="Krishnakumar V."/>
            <person name="Chan A.P."/>
            <person name="Thibaud-Nissen F."/>
            <person name="Schobel S."/>
            <person name="Town C.D."/>
        </authorList>
    </citation>
    <scope>GENOME REANNOTATION</scope>
    <source>
        <strain>cv. Columbia</strain>
    </source>
</reference>
<reference key="3">
    <citation type="submission" date="2005-03" db="EMBL/GenBank/DDBJ databases">
        <title>Large-scale analysis of RIKEN Arabidopsis full-length (RAFL) cDNAs.</title>
        <authorList>
            <person name="Totoki Y."/>
            <person name="Seki M."/>
            <person name="Ishida J."/>
            <person name="Nakajima M."/>
            <person name="Enju A."/>
            <person name="Kamiya A."/>
            <person name="Narusaka M."/>
            <person name="Shin-i T."/>
            <person name="Nakagawa M."/>
            <person name="Sakamoto N."/>
            <person name="Oishi K."/>
            <person name="Kohara Y."/>
            <person name="Kobayashi M."/>
            <person name="Toyoda A."/>
            <person name="Sakaki Y."/>
            <person name="Sakurai T."/>
            <person name="Iida K."/>
            <person name="Akiyama K."/>
            <person name="Satou M."/>
            <person name="Toyoda T."/>
            <person name="Konagaya A."/>
            <person name="Carninci P."/>
            <person name="Kawai J."/>
            <person name="Hayashizaki Y."/>
            <person name="Shinozaki K."/>
        </authorList>
    </citation>
    <scope>NUCLEOTIDE SEQUENCE [LARGE SCALE MRNA] OF 480-1091</scope>
    <source>
        <strain>cv. Columbia</strain>
    </source>
</reference>
<reference key="4">
    <citation type="journal article" date="2005" name="Plant J.">
        <title>Requirement of aminoacyl-tRNA synthetases for gametogenesis and embryo development in Arabidopsis.</title>
        <authorList>
            <person name="Berg M."/>
            <person name="Rogers R."/>
            <person name="Muralla R."/>
            <person name="Meinke D."/>
        </authorList>
    </citation>
    <scope>SUBCELLULAR LOCATION</scope>
</reference>
<reference key="5">
    <citation type="journal article" date="2005" name="Proc. Natl. Acad. Sci. U.S.A.">
        <title>Dual targeting is the rule for organellar aminoacyl-tRNA synthetases in Arabidopsis thaliana.</title>
        <authorList>
            <person name="Duchene A.-M."/>
            <person name="Giritch A."/>
            <person name="Hoffmann B."/>
            <person name="Cognat V."/>
            <person name="Lancelin D."/>
            <person name="Peeters N.M."/>
            <person name="Zaepfel M."/>
            <person name="Marechal-Drouard L."/>
            <person name="Small I.D."/>
        </authorList>
    </citation>
    <scope>SUBCELLULAR LOCATION</scope>
</reference>
<reference key="6">
    <citation type="journal article" date="2009" name="J. Proteomics">
        <title>Phosphoproteomic analysis of nuclei-enriched fractions from Arabidopsis thaliana.</title>
        <authorList>
            <person name="Jones A.M.E."/>
            <person name="MacLean D."/>
            <person name="Studholme D.J."/>
            <person name="Serna-Sanz A."/>
            <person name="Andreasson E."/>
            <person name="Rathjen J.P."/>
            <person name="Peck S.C."/>
        </authorList>
    </citation>
    <scope>IDENTIFICATION BY MASS SPECTROMETRY [LARGE SCALE ANALYSIS]</scope>
    <source>
        <strain>cv. Columbia</strain>
    </source>
</reference>
<sequence length="1091" mass="123451">MASESKSYARRDRLLEIEATVRKWWEDEDVFRAESCENLPKPGEKFFSTFPFPYMNGYLHIGHAFSLSKVDFASAYHRLRGANVLLPFGFHCTGMPIKASADKLRREIEQFGNPPVFTAEDTTKVPEVQEESSDTIALPIPGQFKGKKSKVAAKAGGQVYQWEIMRSFGLTDSEIANFREPSEWLYYFPPLAVEDLRAYGLGCDWRRSFVTTDVNPFFDAFVRWQMRKLKSMGKIVKDRRYTIFSPLDGQPCADHDRATGEGVQPQEYTLIKMEVVKPFPLKLGPLEGKRVFLAAATLRPETMYGQTNAWVLPDGKYGAYEISETEVFILTERAALNLAYQNFSKNPQEPSCLVELTGYDLIGLPLRSPLSVNEIIYALPMLTILTNKGTGIVTSVPSDAPDDYMALQDLIKKPALQDKYGVKTEWLPTEIIPIINIPEFGDKAAEKVCLDLKIKSQNDKEKLAEAKRLTYLKGFTEGTMLIGEFFGRKVQEIKPIIKTKLIETGEAIIYSEPEKPVMSRSGDECVVALTDQWYITYGESEWRKIAEECLSKMNLYSDETRHGFEHTLSWLNQWACSRSFGLGTRIPWDEQFLVESLSDSSLYMAYYTVAHIFHDGDMYKGSKSLIRPQQMNDEVWEYLFCDGPYPKSSDIPSAVLSEMKQEFDYWYPLDLRVSGKDLIQNHLTFFIYNHTALMANRNWPRGIRCNGHIMLNSEKMSKSTGNFRTLRQSIEEFSATGTRFCLADAGDGVDDANFAFETANAAILRLTKELTWMEEVLDVESSLRTGPPSTYADKVFENDMNIALRLTERAYKDCLFREALKNGFYDLQAARDEYRLSCGTGGMHHDLLLKFMDVQTRLIVPICPHFADYVWRKVLNKEGCVLTAGWPPSNEPDLVLKSANKYLQDSIVLMRKLLQKQLSGSKKGAKKGAQVTAVPEGKLKGLVYVNEQFDGWRAHCLRILQSRFDQQTCSFPPDTEMLAELSATLLQEGKNLKAIQKVCMPFLKFKKDEAISIGTQALNLRLPFGEIEVLQSNKDLIRRQLGLEEVEIYSASDPDDVSIAGPHASLLTQNPPSPGSPTAIFVTSTSVCPPS</sequence>